<proteinExistence type="inferred from homology"/>
<sequence>MGKRIGLFGGTFDPVHIGHMRSAVEMAEQFALDELRLLPNARPPHRETPQVSAAQRLAMVERAVAGVERLTVDPRELQRDKPSYTIDTLESVRAELAADDQLFMLIGWDAFCGLPTWHRWEALLDHCHIVVLQRPDADSEPPESLRDLLAARSVADPQALKGPGGQITFVWQTPLAVSATQIRALLGAGRSVRFLVPDAVLNYIEAHHLYRAPH</sequence>
<organism>
    <name type="scientific">Pseudomonas aeruginosa (strain UCBPP-PA14)</name>
    <dbReference type="NCBI Taxonomy" id="208963"/>
    <lineage>
        <taxon>Bacteria</taxon>
        <taxon>Pseudomonadati</taxon>
        <taxon>Pseudomonadota</taxon>
        <taxon>Gammaproteobacteria</taxon>
        <taxon>Pseudomonadales</taxon>
        <taxon>Pseudomonadaceae</taxon>
        <taxon>Pseudomonas</taxon>
    </lineage>
</organism>
<comment type="function">
    <text evidence="1">Catalyzes the reversible adenylation of nicotinate mononucleotide (NaMN) to nicotinic acid adenine dinucleotide (NaAD).</text>
</comment>
<comment type="catalytic activity">
    <reaction evidence="1">
        <text>nicotinate beta-D-ribonucleotide + ATP + H(+) = deamido-NAD(+) + diphosphate</text>
        <dbReference type="Rhea" id="RHEA:22860"/>
        <dbReference type="ChEBI" id="CHEBI:15378"/>
        <dbReference type="ChEBI" id="CHEBI:30616"/>
        <dbReference type="ChEBI" id="CHEBI:33019"/>
        <dbReference type="ChEBI" id="CHEBI:57502"/>
        <dbReference type="ChEBI" id="CHEBI:58437"/>
        <dbReference type="EC" id="2.7.7.18"/>
    </reaction>
</comment>
<comment type="pathway">
    <text evidence="1">Cofactor biosynthesis; NAD(+) biosynthesis; deamido-NAD(+) from nicotinate D-ribonucleotide: step 1/1.</text>
</comment>
<comment type="similarity">
    <text evidence="1">Belongs to the NadD family.</text>
</comment>
<accession>Q02SH3</accession>
<evidence type="ECO:0000255" key="1">
    <source>
        <dbReference type="HAMAP-Rule" id="MF_00244"/>
    </source>
</evidence>
<name>NADD_PSEAB</name>
<reference key="1">
    <citation type="journal article" date="2006" name="Genome Biol.">
        <title>Genomic analysis reveals that Pseudomonas aeruginosa virulence is combinatorial.</title>
        <authorList>
            <person name="Lee D.G."/>
            <person name="Urbach J.M."/>
            <person name="Wu G."/>
            <person name="Liberati N.T."/>
            <person name="Feinbaum R.L."/>
            <person name="Miyata S."/>
            <person name="Diggins L.T."/>
            <person name="He J."/>
            <person name="Saucier M."/>
            <person name="Deziel E."/>
            <person name="Friedman L."/>
            <person name="Li L."/>
            <person name="Grills G."/>
            <person name="Montgomery K."/>
            <person name="Kucherlapati R."/>
            <person name="Rahme L.G."/>
            <person name="Ausubel F.M."/>
        </authorList>
    </citation>
    <scope>NUCLEOTIDE SEQUENCE [LARGE SCALE GENOMIC DNA]</scope>
    <source>
        <strain>UCBPP-PA14</strain>
    </source>
</reference>
<feature type="chain" id="PRO_0000310130" description="Probable nicotinate-nucleotide adenylyltransferase">
    <location>
        <begin position="1"/>
        <end position="214"/>
    </location>
</feature>
<protein>
    <recommendedName>
        <fullName evidence="1">Probable nicotinate-nucleotide adenylyltransferase</fullName>
        <ecNumber evidence="1">2.7.7.18</ecNumber>
    </recommendedName>
    <alternativeName>
        <fullName evidence="1">Deamido-NAD(+) diphosphorylase</fullName>
    </alternativeName>
    <alternativeName>
        <fullName evidence="1">Deamido-NAD(+) pyrophosphorylase</fullName>
    </alternativeName>
    <alternativeName>
        <fullName evidence="1">Nicotinate mononucleotide adenylyltransferase</fullName>
        <shortName evidence="1">NaMN adenylyltransferase</shortName>
    </alternativeName>
</protein>
<dbReference type="EC" id="2.7.7.18" evidence="1"/>
<dbReference type="EMBL" id="CP000438">
    <property type="protein sequence ID" value="ABJ13280.1"/>
    <property type="molecule type" value="Genomic_DNA"/>
</dbReference>
<dbReference type="RefSeq" id="WP_003093199.1">
    <property type="nucleotide sequence ID" value="NZ_CP034244.1"/>
</dbReference>
<dbReference type="SMR" id="Q02SH3"/>
<dbReference type="KEGG" id="pau:PA14_12020"/>
<dbReference type="PseudoCAP" id="PA14_12020"/>
<dbReference type="HOGENOM" id="CLU_069765_0_0_6"/>
<dbReference type="BioCyc" id="PAER208963:G1G74-998-MONOMER"/>
<dbReference type="UniPathway" id="UPA00253">
    <property type="reaction ID" value="UER00332"/>
</dbReference>
<dbReference type="Proteomes" id="UP000000653">
    <property type="component" value="Chromosome"/>
</dbReference>
<dbReference type="GO" id="GO:0005524">
    <property type="term" value="F:ATP binding"/>
    <property type="evidence" value="ECO:0007669"/>
    <property type="project" value="UniProtKB-KW"/>
</dbReference>
<dbReference type="GO" id="GO:0004515">
    <property type="term" value="F:nicotinate-nucleotide adenylyltransferase activity"/>
    <property type="evidence" value="ECO:0007669"/>
    <property type="project" value="UniProtKB-UniRule"/>
</dbReference>
<dbReference type="GO" id="GO:0009435">
    <property type="term" value="P:NAD biosynthetic process"/>
    <property type="evidence" value="ECO:0007669"/>
    <property type="project" value="UniProtKB-UniRule"/>
</dbReference>
<dbReference type="CDD" id="cd02165">
    <property type="entry name" value="NMNAT"/>
    <property type="match status" value="1"/>
</dbReference>
<dbReference type="FunFam" id="3.40.50.620:FF:000291">
    <property type="entry name" value="Probable nicotinate-nucleotide adenylyltransferase"/>
    <property type="match status" value="1"/>
</dbReference>
<dbReference type="Gene3D" id="3.40.50.620">
    <property type="entry name" value="HUPs"/>
    <property type="match status" value="1"/>
</dbReference>
<dbReference type="HAMAP" id="MF_00244">
    <property type="entry name" value="NaMN_adenylyltr"/>
    <property type="match status" value="1"/>
</dbReference>
<dbReference type="InterPro" id="IPR004821">
    <property type="entry name" value="Cyt_trans-like"/>
</dbReference>
<dbReference type="InterPro" id="IPR005248">
    <property type="entry name" value="NadD/NMNAT"/>
</dbReference>
<dbReference type="InterPro" id="IPR014729">
    <property type="entry name" value="Rossmann-like_a/b/a_fold"/>
</dbReference>
<dbReference type="NCBIfam" id="TIGR00125">
    <property type="entry name" value="cyt_tran_rel"/>
    <property type="match status" value="1"/>
</dbReference>
<dbReference type="NCBIfam" id="TIGR00482">
    <property type="entry name" value="nicotinate (nicotinamide) nucleotide adenylyltransferase"/>
    <property type="match status" value="1"/>
</dbReference>
<dbReference type="NCBIfam" id="NF000839">
    <property type="entry name" value="PRK00071.1-1"/>
    <property type="match status" value="1"/>
</dbReference>
<dbReference type="NCBIfam" id="NF000840">
    <property type="entry name" value="PRK00071.1-3"/>
    <property type="match status" value="1"/>
</dbReference>
<dbReference type="PANTHER" id="PTHR39321">
    <property type="entry name" value="NICOTINATE-NUCLEOTIDE ADENYLYLTRANSFERASE-RELATED"/>
    <property type="match status" value="1"/>
</dbReference>
<dbReference type="PANTHER" id="PTHR39321:SF3">
    <property type="entry name" value="PHOSPHOPANTETHEINE ADENYLYLTRANSFERASE"/>
    <property type="match status" value="1"/>
</dbReference>
<dbReference type="Pfam" id="PF01467">
    <property type="entry name" value="CTP_transf_like"/>
    <property type="match status" value="1"/>
</dbReference>
<dbReference type="SUPFAM" id="SSF52374">
    <property type="entry name" value="Nucleotidylyl transferase"/>
    <property type="match status" value="1"/>
</dbReference>
<gene>
    <name evidence="1" type="primary">nadD</name>
    <name type="ordered locus">PA14_12020</name>
</gene>
<keyword id="KW-0067">ATP-binding</keyword>
<keyword id="KW-0520">NAD</keyword>
<keyword id="KW-0547">Nucleotide-binding</keyword>
<keyword id="KW-0548">Nucleotidyltransferase</keyword>
<keyword id="KW-0662">Pyridine nucleotide biosynthesis</keyword>
<keyword id="KW-0808">Transferase</keyword>